<keyword id="KW-0963">Cytoplasm</keyword>
<keyword id="KW-0664">Pyridoxine biosynthesis</keyword>
<keyword id="KW-0808">Transferase</keyword>
<dbReference type="EC" id="2.6.99.2" evidence="1"/>
<dbReference type="EMBL" id="AM920689">
    <property type="protein sequence ID" value="CAP49342.1"/>
    <property type="molecule type" value="Genomic_DNA"/>
</dbReference>
<dbReference type="SMR" id="B0RLF1"/>
<dbReference type="KEGG" id="xca:xcc-b100_0014"/>
<dbReference type="HOGENOM" id="CLU_074563_1_0_6"/>
<dbReference type="UniPathway" id="UPA00244">
    <property type="reaction ID" value="UER00313"/>
</dbReference>
<dbReference type="Proteomes" id="UP000001188">
    <property type="component" value="Chromosome"/>
</dbReference>
<dbReference type="GO" id="GO:0005829">
    <property type="term" value="C:cytosol"/>
    <property type="evidence" value="ECO:0007669"/>
    <property type="project" value="TreeGrafter"/>
</dbReference>
<dbReference type="GO" id="GO:0033856">
    <property type="term" value="F:pyridoxine 5'-phosphate synthase activity"/>
    <property type="evidence" value="ECO:0007669"/>
    <property type="project" value="UniProtKB-EC"/>
</dbReference>
<dbReference type="GO" id="GO:0008615">
    <property type="term" value="P:pyridoxine biosynthetic process"/>
    <property type="evidence" value="ECO:0007669"/>
    <property type="project" value="UniProtKB-UniRule"/>
</dbReference>
<dbReference type="CDD" id="cd00003">
    <property type="entry name" value="PNPsynthase"/>
    <property type="match status" value="1"/>
</dbReference>
<dbReference type="FunFam" id="3.20.20.70:FF:000150">
    <property type="entry name" value="Pyridoxine 5'-phosphate synthase"/>
    <property type="match status" value="1"/>
</dbReference>
<dbReference type="Gene3D" id="3.20.20.70">
    <property type="entry name" value="Aldolase class I"/>
    <property type="match status" value="1"/>
</dbReference>
<dbReference type="HAMAP" id="MF_00279">
    <property type="entry name" value="PdxJ"/>
    <property type="match status" value="1"/>
</dbReference>
<dbReference type="InterPro" id="IPR013785">
    <property type="entry name" value="Aldolase_TIM"/>
</dbReference>
<dbReference type="InterPro" id="IPR004569">
    <property type="entry name" value="PyrdxlP_synth_PdxJ"/>
</dbReference>
<dbReference type="InterPro" id="IPR036130">
    <property type="entry name" value="Pyridoxine-5'_phos_synth"/>
</dbReference>
<dbReference type="NCBIfam" id="TIGR00559">
    <property type="entry name" value="pdxJ"/>
    <property type="match status" value="1"/>
</dbReference>
<dbReference type="NCBIfam" id="NF003626">
    <property type="entry name" value="PRK05265.1-4"/>
    <property type="match status" value="1"/>
</dbReference>
<dbReference type="PANTHER" id="PTHR30456">
    <property type="entry name" value="PYRIDOXINE 5'-PHOSPHATE SYNTHASE"/>
    <property type="match status" value="1"/>
</dbReference>
<dbReference type="PANTHER" id="PTHR30456:SF0">
    <property type="entry name" value="PYRIDOXINE 5'-PHOSPHATE SYNTHASE"/>
    <property type="match status" value="1"/>
</dbReference>
<dbReference type="Pfam" id="PF03740">
    <property type="entry name" value="PdxJ"/>
    <property type="match status" value="1"/>
</dbReference>
<dbReference type="SUPFAM" id="SSF63892">
    <property type="entry name" value="Pyridoxine 5'-phosphate synthase"/>
    <property type="match status" value="1"/>
</dbReference>
<feature type="chain" id="PRO_1000114830" description="Pyridoxine 5'-phosphate synthase">
    <location>
        <begin position="1"/>
        <end position="256"/>
    </location>
</feature>
<feature type="active site" description="Proton acceptor" evidence="1">
    <location>
        <position position="44"/>
    </location>
</feature>
<feature type="active site" description="Proton acceptor" evidence="1">
    <location>
        <position position="74"/>
    </location>
</feature>
<feature type="active site" description="Proton donor" evidence="1">
    <location>
        <position position="202"/>
    </location>
</feature>
<feature type="binding site" evidence="1">
    <location>
        <position position="8"/>
    </location>
    <ligand>
        <name>3-amino-2-oxopropyl phosphate</name>
        <dbReference type="ChEBI" id="CHEBI:57279"/>
    </ligand>
</feature>
<feature type="binding site" evidence="1">
    <location>
        <position position="19"/>
    </location>
    <ligand>
        <name>3-amino-2-oxopropyl phosphate</name>
        <dbReference type="ChEBI" id="CHEBI:57279"/>
    </ligand>
</feature>
<feature type="binding site" evidence="1">
    <location>
        <position position="46"/>
    </location>
    <ligand>
        <name>1-deoxy-D-xylulose 5-phosphate</name>
        <dbReference type="ChEBI" id="CHEBI:57792"/>
    </ligand>
</feature>
<feature type="binding site" evidence="1">
    <location>
        <position position="51"/>
    </location>
    <ligand>
        <name>1-deoxy-D-xylulose 5-phosphate</name>
        <dbReference type="ChEBI" id="CHEBI:57792"/>
    </ligand>
</feature>
<feature type="binding site" evidence="1">
    <location>
        <position position="111"/>
    </location>
    <ligand>
        <name>1-deoxy-D-xylulose 5-phosphate</name>
        <dbReference type="ChEBI" id="CHEBI:57792"/>
    </ligand>
</feature>
<feature type="binding site" evidence="1">
    <location>
        <position position="203"/>
    </location>
    <ligand>
        <name>3-amino-2-oxopropyl phosphate</name>
        <dbReference type="ChEBI" id="CHEBI:57279"/>
    </ligand>
</feature>
<feature type="binding site" evidence="1">
    <location>
        <begin position="225"/>
        <end position="226"/>
    </location>
    <ligand>
        <name>3-amino-2-oxopropyl phosphate</name>
        <dbReference type="ChEBI" id="CHEBI:57279"/>
    </ligand>
</feature>
<feature type="site" description="Transition state stabilizer" evidence="1">
    <location>
        <position position="162"/>
    </location>
</feature>
<gene>
    <name evidence="1" type="primary">pdxJ</name>
    <name type="ordered locus">xcc-b100_0014</name>
</gene>
<sequence length="256" mass="26800">MSTHLSVNVNKIAVLRNSRGGQDPDVVQAARSCIAAGAHGITVHPRPDQRHIRADDVYALSTLTRMHGVEFNIEGNPFAPPRAGYPGLLELCRATRPQQVTLVPDGDGQLTSDHGVDFARDGARLAPLIAAFKTLGCRVSLFVDAGNPEIAQAAALGADRIELYTGPYAEAHHHGQSQPSLALFADAARRAHAAGLGINAGHDLSQHNLADFLAGVPDVLEVSIGHALVGEALYQGLEPTVRAYLAIIAGGATTAA</sequence>
<comment type="function">
    <text evidence="1">Catalyzes the complicated ring closure reaction between the two acyclic compounds 1-deoxy-D-xylulose-5-phosphate (DXP) and 3-amino-2-oxopropyl phosphate (1-amino-acetone-3-phosphate or AAP) to form pyridoxine 5'-phosphate (PNP) and inorganic phosphate.</text>
</comment>
<comment type="catalytic activity">
    <reaction evidence="1">
        <text>3-amino-2-oxopropyl phosphate + 1-deoxy-D-xylulose 5-phosphate = pyridoxine 5'-phosphate + phosphate + 2 H2O + H(+)</text>
        <dbReference type="Rhea" id="RHEA:15265"/>
        <dbReference type="ChEBI" id="CHEBI:15377"/>
        <dbReference type="ChEBI" id="CHEBI:15378"/>
        <dbReference type="ChEBI" id="CHEBI:43474"/>
        <dbReference type="ChEBI" id="CHEBI:57279"/>
        <dbReference type="ChEBI" id="CHEBI:57792"/>
        <dbReference type="ChEBI" id="CHEBI:58589"/>
        <dbReference type="EC" id="2.6.99.2"/>
    </reaction>
</comment>
<comment type="pathway">
    <text evidence="1">Cofactor biosynthesis; pyridoxine 5'-phosphate biosynthesis; pyridoxine 5'-phosphate from D-erythrose 4-phosphate: step 5/5.</text>
</comment>
<comment type="subunit">
    <text evidence="1">Homooctamer; tetramer of dimers.</text>
</comment>
<comment type="subcellular location">
    <subcellularLocation>
        <location evidence="1">Cytoplasm</location>
    </subcellularLocation>
</comment>
<comment type="similarity">
    <text evidence="1">Belongs to the PNP synthase family.</text>
</comment>
<protein>
    <recommendedName>
        <fullName evidence="1">Pyridoxine 5'-phosphate synthase</fullName>
        <shortName evidence="1">PNP synthase</shortName>
        <ecNumber evidence="1">2.6.99.2</ecNumber>
    </recommendedName>
</protein>
<evidence type="ECO:0000255" key="1">
    <source>
        <dbReference type="HAMAP-Rule" id="MF_00279"/>
    </source>
</evidence>
<proteinExistence type="inferred from homology"/>
<organism>
    <name type="scientific">Xanthomonas campestris pv. campestris (strain B100)</name>
    <dbReference type="NCBI Taxonomy" id="509169"/>
    <lineage>
        <taxon>Bacteria</taxon>
        <taxon>Pseudomonadati</taxon>
        <taxon>Pseudomonadota</taxon>
        <taxon>Gammaproteobacteria</taxon>
        <taxon>Lysobacterales</taxon>
        <taxon>Lysobacteraceae</taxon>
        <taxon>Xanthomonas</taxon>
    </lineage>
</organism>
<accession>B0RLF1</accession>
<name>PDXJ_XANCB</name>
<reference key="1">
    <citation type="journal article" date="2008" name="J. Biotechnol.">
        <title>The genome of Xanthomonas campestris pv. campestris B100 and its use for the reconstruction of metabolic pathways involved in xanthan biosynthesis.</title>
        <authorList>
            <person name="Vorhoelter F.-J."/>
            <person name="Schneiker S."/>
            <person name="Goesmann A."/>
            <person name="Krause L."/>
            <person name="Bekel T."/>
            <person name="Kaiser O."/>
            <person name="Linke B."/>
            <person name="Patschkowski T."/>
            <person name="Rueckert C."/>
            <person name="Schmid J."/>
            <person name="Sidhu V.K."/>
            <person name="Sieber V."/>
            <person name="Tauch A."/>
            <person name="Watt S.A."/>
            <person name="Weisshaar B."/>
            <person name="Becker A."/>
            <person name="Niehaus K."/>
            <person name="Puehler A."/>
        </authorList>
    </citation>
    <scope>NUCLEOTIDE SEQUENCE [LARGE SCALE GENOMIC DNA]</scope>
    <source>
        <strain>B100</strain>
    </source>
</reference>